<accession>Q06SD8</accession>
<reference key="1">
    <citation type="journal article" date="2006" name="Mol. Genet. Genomics">
        <title>Distinctive architecture of the chloroplast genome in the chlorophycean green alga Stigeoclonium helveticum.</title>
        <authorList>
            <person name="Belanger A.-S."/>
            <person name="Brouard J.-S."/>
            <person name="Charlebois P."/>
            <person name="Otis C."/>
            <person name="Lemieux C."/>
            <person name="Turmel M."/>
        </authorList>
    </citation>
    <scope>NUCLEOTIDE SEQUENCE [LARGE SCALE GENOMIC DNA]</scope>
    <source>
        <strain>UTEX 441</strain>
    </source>
</reference>
<dbReference type="EMBL" id="DQ630521">
    <property type="protein sequence ID" value="ABF60193.1"/>
    <property type="molecule type" value="Genomic_DNA"/>
</dbReference>
<dbReference type="RefSeq" id="YP_764428.1">
    <property type="nucleotide sequence ID" value="NC_008372.1"/>
</dbReference>
<dbReference type="SMR" id="Q06SD8"/>
<dbReference type="GeneID" id="4308373"/>
<dbReference type="GO" id="GO:0009507">
    <property type="term" value="C:chloroplast"/>
    <property type="evidence" value="ECO:0007669"/>
    <property type="project" value="UniProtKB-SubCell"/>
</dbReference>
<dbReference type="GO" id="GO:0015935">
    <property type="term" value="C:small ribosomal subunit"/>
    <property type="evidence" value="ECO:0007669"/>
    <property type="project" value="TreeGrafter"/>
</dbReference>
<dbReference type="GO" id="GO:0019843">
    <property type="term" value="F:rRNA binding"/>
    <property type="evidence" value="ECO:0007669"/>
    <property type="project" value="UniProtKB-UniRule"/>
</dbReference>
<dbReference type="GO" id="GO:0003735">
    <property type="term" value="F:structural constituent of ribosome"/>
    <property type="evidence" value="ECO:0007669"/>
    <property type="project" value="InterPro"/>
</dbReference>
<dbReference type="GO" id="GO:0006412">
    <property type="term" value="P:translation"/>
    <property type="evidence" value="ECO:0007669"/>
    <property type="project" value="UniProtKB-UniRule"/>
</dbReference>
<dbReference type="FunFam" id="1.10.287.1480:FF:000001">
    <property type="entry name" value="30S ribosomal protein S14"/>
    <property type="match status" value="1"/>
</dbReference>
<dbReference type="Gene3D" id="1.10.287.1480">
    <property type="match status" value="1"/>
</dbReference>
<dbReference type="HAMAP" id="MF_00537">
    <property type="entry name" value="Ribosomal_uS14_1"/>
    <property type="match status" value="1"/>
</dbReference>
<dbReference type="InterPro" id="IPR001209">
    <property type="entry name" value="Ribosomal_uS14"/>
</dbReference>
<dbReference type="InterPro" id="IPR023036">
    <property type="entry name" value="Ribosomal_uS14_bac/plastid"/>
</dbReference>
<dbReference type="InterPro" id="IPR018271">
    <property type="entry name" value="Ribosomal_uS14_CS"/>
</dbReference>
<dbReference type="NCBIfam" id="NF006477">
    <property type="entry name" value="PRK08881.1"/>
    <property type="match status" value="1"/>
</dbReference>
<dbReference type="PANTHER" id="PTHR19836">
    <property type="entry name" value="30S RIBOSOMAL PROTEIN S14"/>
    <property type="match status" value="1"/>
</dbReference>
<dbReference type="PANTHER" id="PTHR19836:SF19">
    <property type="entry name" value="SMALL RIBOSOMAL SUBUNIT PROTEIN US14M"/>
    <property type="match status" value="1"/>
</dbReference>
<dbReference type="Pfam" id="PF00253">
    <property type="entry name" value="Ribosomal_S14"/>
    <property type="match status" value="1"/>
</dbReference>
<dbReference type="SUPFAM" id="SSF57716">
    <property type="entry name" value="Glucocorticoid receptor-like (DNA-binding domain)"/>
    <property type="match status" value="1"/>
</dbReference>
<dbReference type="PROSITE" id="PS00527">
    <property type="entry name" value="RIBOSOMAL_S14"/>
    <property type="match status" value="1"/>
</dbReference>
<geneLocation type="chloroplast"/>
<gene>
    <name evidence="1" type="primary">rps14</name>
</gene>
<proteinExistence type="inferred from homology"/>
<feature type="chain" id="PRO_0000276707" description="Small ribosomal subunit protein uS14c">
    <location>
        <begin position="1"/>
        <end position="100"/>
    </location>
</feature>
<evidence type="ECO:0000255" key="1">
    <source>
        <dbReference type="HAMAP-Rule" id="MF_00537"/>
    </source>
</evidence>
<evidence type="ECO:0000305" key="2"/>
<name>RR14_STIHE</name>
<comment type="function">
    <text evidence="1">Binds 16S rRNA, required for the assembly of 30S particles.</text>
</comment>
<comment type="subunit">
    <text evidence="1">Part of the 30S ribosomal subunit.</text>
</comment>
<comment type="subcellular location">
    <subcellularLocation>
        <location>Plastid</location>
        <location>Chloroplast</location>
    </subcellularLocation>
</comment>
<comment type="similarity">
    <text evidence="1">Belongs to the universal ribosomal protein uS14 family.</text>
</comment>
<organism>
    <name type="scientific">Stigeoclonium helveticum</name>
    <name type="common">Green alga</name>
    <dbReference type="NCBI Taxonomy" id="55999"/>
    <lineage>
        <taxon>Eukaryota</taxon>
        <taxon>Viridiplantae</taxon>
        <taxon>Chlorophyta</taxon>
        <taxon>core chlorophytes</taxon>
        <taxon>Chlorophyceae</taxon>
        <taxon>OCC clade</taxon>
        <taxon>Chaetophorales</taxon>
        <taxon>Chaetophoraceae</taxon>
        <taxon>Stigeoclonium</taxon>
    </lineage>
</organism>
<protein>
    <recommendedName>
        <fullName evidence="1">Small ribosomal subunit protein uS14c</fullName>
    </recommendedName>
    <alternativeName>
        <fullName evidence="2">30S ribosomal protein S14, chloroplastic</fullName>
    </alternativeName>
</protein>
<keyword id="KW-0150">Chloroplast</keyword>
<keyword id="KW-0934">Plastid</keyword>
<keyword id="KW-0687">Ribonucleoprotein</keyword>
<keyword id="KW-0689">Ribosomal protein</keyword>
<keyword id="KW-0694">RNA-binding</keyword>
<keyword id="KW-0699">rRNA-binding</keyword>
<sequence length="100" mass="11871">MAKKNMIQRELKRQKCVLKYETRRQLLKKQITLASTLREKLMLHRQLQKLPRNSSAVRLRNRCMITGRSRGYHRDFGLSRNVLREMAHQGLLPGVVKSSW</sequence>